<protein>
    <recommendedName>
        <fullName evidence="7">Collagen alpha-1(I) chain</fullName>
    </recommendedName>
    <alternativeName>
        <fullName evidence="1">Alpha-1 type I collagen</fullName>
    </alternativeName>
</protein>
<feature type="chain" id="PRO_0000448458" description="Collagen alpha-1(I) chain">
    <location>
        <begin position="1"/>
        <end position="974"/>
    </location>
</feature>
<feature type="region of interest" description="Disordered" evidence="5">
    <location>
        <begin position="1"/>
        <end position="974"/>
    </location>
</feature>
<feature type="compositionally biased region" description="Low complexity" evidence="5">
    <location>
        <begin position="1"/>
        <end position="14"/>
    </location>
</feature>
<feature type="compositionally biased region" description="Low complexity" evidence="5">
    <location>
        <begin position="25"/>
        <end position="44"/>
    </location>
</feature>
<feature type="compositionally biased region" description="Basic and acidic residues" evidence="5">
    <location>
        <begin position="56"/>
        <end position="73"/>
    </location>
</feature>
<feature type="compositionally biased region" description="Low complexity" evidence="5">
    <location>
        <begin position="98"/>
        <end position="114"/>
    </location>
</feature>
<feature type="compositionally biased region" description="Low complexity" evidence="5">
    <location>
        <begin position="132"/>
        <end position="150"/>
    </location>
</feature>
<feature type="compositionally biased region" description="Pro residues" evidence="5">
    <location>
        <begin position="152"/>
        <end position="164"/>
    </location>
</feature>
<feature type="compositionally biased region" description="Low complexity" evidence="5">
    <location>
        <begin position="198"/>
        <end position="228"/>
    </location>
</feature>
<feature type="compositionally biased region" description="Gly residues" evidence="5">
    <location>
        <begin position="303"/>
        <end position="312"/>
    </location>
</feature>
<feature type="compositionally biased region" description="Low complexity" evidence="5">
    <location>
        <begin position="352"/>
        <end position="378"/>
    </location>
</feature>
<feature type="compositionally biased region" description="Low complexity" evidence="5">
    <location>
        <begin position="387"/>
        <end position="406"/>
    </location>
</feature>
<feature type="compositionally biased region" description="Low complexity" evidence="5">
    <location>
        <begin position="504"/>
        <end position="517"/>
    </location>
</feature>
<feature type="compositionally biased region" description="Low complexity" evidence="5">
    <location>
        <begin position="581"/>
        <end position="595"/>
    </location>
</feature>
<feature type="compositionally biased region" description="Low complexity" evidence="5">
    <location>
        <begin position="608"/>
        <end position="635"/>
    </location>
</feature>
<feature type="compositionally biased region" description="Pro residues" evidence="5">
    <location>
        <begin position="637"/>
        <end position="649"/>
    </location>
</feature>
<feature type="compositionally biased region" description="Low complexity" evidence="5">
    <location>
        <begin position="664"/>
        <end position="680"/>
    </location>
</feature>
<feature type="compositionally biased region" description="Low complexity" evidence="5">
    <location>
        <begin position="709"/>
        <end position="718"/>
    </location>
</feature>
<feature type="compositionally biased region" description="Low complexity" evidence="5">
    <location>
        <begin position="730"/>
        <end position="742"/>
    </location>
</feature>
<feature type="compositionally biased region" description="Pro residues" evidence="5">
    <location>
        <begin position="792"/>
        <end position="802"/>
    </location>
</feature>
<feature type="compositionally biased region" description="Low complexity" evidence="5">
    <location>
        <begin position="804"/>
        <end position="826"/>
    </location>
</feature>
<feature type="compositionally biased region" description="Pro residues" evidence="5">
    <location>
        <begin position="828"/>
        <end position="844"/>
    </location>
</feature>
<feature type="compositionally biased region" description="Low complexity" evidence="5">
    <location>
        <begin position="865"/>
        <end position="879"/>
    </location>
</feature>
<feature type="compositionally biased region" description="Basic and acidic residues" evidence="5">
    <location>
        <begin position="880"/>
        <end position="894"/>
    </location>
</feature>
<feature type="compositionally biased region" description="Low complexity" evidence="5">
    <location>
        <begin position="908"/>
        <end position="941"/>
    </location>
</feature>
<feature type="compositionally biased region" description="Pro residues" evidence="5">
    <location>
        <begin position="959"/>
        <end position="974"/>
    </location>
</feature>
<feature type="modified residue" description="4-hydroxyproline" evidence="3">
    <location>
        <position position="17"/>
    </location>
</feature>
<feature type="modified residue" description="4-hydroxyproline" evidence="3">
    <location>
        <position position="20"/>
    </location>
</feature>
<feature type="modified residue" description="4-hydroxyproline" evidence="3">
    <location>
        <position position="23"/>
    </location>
</feature>
<feature type="modified residue" description="4-hydroxyproline" evidence="3">
    <location>
        <position position="32"/>
    </location>
</feature>
<feature type="modified residue" description="4-hydroxyproline" evidence="3">
    <location>
        <position position="35"/>
    </location>
</feature>
<feature type="modified residue" description="4-hydroxyproline" evidence="3">
    <location>
        <position position="38"/>
    </location>
</feature>
<feature type="modified residue" description="4-hydroxyproline" evidence="3">
    <location>
        <position position="53"/>
    </location>
</feature>
<feature type="modified residue" description="4-hydroxyproline" evidence="3">
    <location>
        <position position="68"/>
    </location>
</feature>
<feature type="modified residue" description="4-hydroxyproline" evidence="3">
    <location>
        <position position="75"/>
    </location>
</feature>
<feature type="modified residue" description="4-hydroxyproline" evidence="3">
    <location>
        <position position="81"/>
    </location>
</feature>
<feature type="modified residue" description="5-hydroxylysine; alternate" evidence="1">
    <location>
        <position position="84"/>
    </location>
</feature>
<feature type="modified residue" description="Phosphoserine" evidence="2">
    <location>
        <position position="90"/>
    </location>
</feature>
<feature type="modified residue" description="4-hydroxyproline" evidence="3">
    <location>
        <position position="108"/>
    </location>
</feature>
<feature type="modified residue" description="4-hydroxyproline" evidence="3">
    <location>
        <position position="111"/>
    </location>
</feature>
<feature type="modified residue" description="4-hydroxyproline" evidence="3">
    <location>
        <position position="117"/>
    </location>
</feature>
<feature type="modified residue" description="4-hydroxyproline" evidence="3">
    <location>
        <position position="126"/>
    </location>
</feature>
<feature type="modified residue" description="4-hydroxyproline" evidence="3">
    <location>
        <position position="132"/>
    </location>
</feature>
<feature type="modified residue" description="4-hydroxyproline" evidence="3">
    <location>
        <position position="153"/>
    </location>
</feature>
<feature type="modified residue" description="4-hydroxyproline" evidence="3">
    <location>
        <position position="162"/>
    </location>
</feature>
<feature type="modified residue" description="4-hydroxyproline" evidence="3">
    <location>
        <position position="165"/>
    </location>
</feature>
<feature type="modified residue" description="4-hydroxyproline" evidence="3">
    <location>
        <position position="192"/>
    </location>
</feature>
<feature type="modified residue" description="4-hydroxyproline" evidence="3">
    <location>
        <position position="195"/>
    </location>
</feature>
<feature type="modified residue" description="4-hydroxyproline" evidence="3">
    <location>
        <position position="207"/>
    </location>
</feature>
<feature type="modified residue" description="4-hydroxyproline" evidence="3">
    <location>
        <position position="213"/>
    </location>
</feature>
<feature type="modified residue" description="4-hydroxyproline" evidence="3">
    <location>
        <position position="222"/>
    </location>
</feature>
<feature type="modified residue" description="4-hydroxyproline" evidence="3">
    <location>
        <position position="228"/>
    </location>
</feature>
<feature type="modified residue" description="4-hydroxyproline" evidence="3">
    <location>
        <position position="231"/>
    </location>
</feature>
<feature type="modified residue" description="4-hydroxyproline" evidence="3">
    <location>
        <position position="245"/>
    </location>
</feature>
<feature type="modified residue" description="5-hydroxylysine" evidence="3">
    <location>
        <position position="248"/>
    </location>
</feature>
<feature type="modified residue" description="4-hydroxyproline" evidence="3">
    <location>
        <position position="254"/>
    </location>
</feature>
<feature type="modified residue" description="4-hydroxyproline" evidence="3">
    <location>
        <position position="257"/>
    </location>
</feature>
<feature type="modified residue" description="4-hydroxyproline" evidence="3">
    <location>
        <position position="269"/>
    </location>
</feature>
<feature type="modified residue" description="4-hydroxyproline" evidence="3">
    <location>
        <position position="278"/>
    </location>
</feature>
<feature type="modified residue" description="4-hydroxyproline" evidence="3">
    <location>
        <position position="293"/>
    </location>
</feature>
<feature type="modified residue" description="4-hydroxyproline" evidence="3">
    <location>
        <position position="299"/>
    </location>
</feature>
<feature type="modified residue" description="4-hydroxyproline" evidence="3">
    <location>
        <position position="308"/>
    </location>
</feature>
<feature type="modified residue" description="4-hydroxyproline" evidence="3">
    <location>
        <position position="314"/>
    </location>
</feature>
<feature type="modified residue" description="5-hydroxylysine" evidence="3">
    <location>
        <position position="323"/>
    </location>
</feature>
<feature type="modified residue" description="4-hydroxyproline" evidence="3">
    <location>
        <position position="328"/>
    </location>
</feature>
<feature type="modified residue" description="4-hydroxyproline" evidence="3">
    <location>
        <position position="337"/>
    </location>
</feature>
<feature type="modified residue" description="4-hydroxyproline" evidence="3">
    <location>
        <position position="343"/>
    </location>
</feature>
<feature type="modified residue" description="4-hydroxyproline" evidence="3">
    <location>
        <position position="349"/>
    </location>
</feature>
<feature type="modified residue" description="4-hydroxyproline" evidence="3">
    <location>
        <position position="358"/>
    </location>
</feature>
<feature type="modified residue" description="4-hydroxyproline" evidence="3">
    <location>
        <position position="361"/>
    </location>
</feature>
<feature type="modified residue" description="4-hydroxyproline" evidence="3">
    <location>
        <position position="370"/>
    </location>
</feature>
<feature type="modified residue" description="4-hydroxyproline" evidence="3">
    <location>
        <position position="379"/>
    </location>
</feature>
<feature type="modified residue" description="4-hydroxyproline" evidence="3">
    <location>
        <position position="385"/>
    </location>
</feature>
<feature type="modified residue" description="4-hydroxyproline" evidence="3">
    <location>
        <position position="397"/>
    </location>
</feature>
<feature type="modified residue" description="4-hydroxyproline" evidence="3">
    <location>
        <position position="406"/>
    </location>
</feature>
<feature type="modified residue" description="4-hydroxyproline" evidence="3">
    <location>
        <position position="415"/>
    </location>
</feature>
<feature type="modified residue" description="4-hydroxyproline" evidence="3">
    <location>
        <position position="418"/>
    </location>
</feature>
<feature type="modified residue" description="4-hydroxyproline" evidence="3">
    <location>
        <position position="436"/>
    </location>
</feature>
<feature type="modified residue" description="4-hydroxyproline" evidence="3">
    <location>
        <position position="454"/>
    </location>
</feature>
<feature type="modified residue" description="4-hydroxyproline" evidence="3">
    <location>
        <position position="460"/>
    </location>
</feature>
<feature type="modified residue" description="4-hydroxyproline" evidence="3">
    <location>
        <position position="466"/>
    </location>
</feature>
<feature type="modified residue" description="4-hydroxyproline" evidence="3">
    <location>
        <position position="472"/>
    </location>
</feature>
<feature type="modified residue" description="4-hydroxyproline" evidence="3">
    <location>
        <position position="484"/>
    </location>
</feature>
<feature type="modified residue" description="4-hydroxyproline" evidence="3">
    <location>
        <position position="493"/>
    </location>
</feature>
<feature type="modified residue" description="4-hydroxyproline" evidence="3">
    <location>
        <position position="505"/>
    </location>
</feature>
<feature type="modified residue" description="4-hydroxyproline" evidence="3">
    <location>
        <position position="520"/>
    </location>
</feature>
<feature type="modified residue" description="4-hydroxyproline" evidence="3">
    <location>
        <position position="527"/>
    </location>
</feature>
<feature type="modified residue" description="4-hydroxyproline" evidence="3">
    <location>
        <position position="536"/>
    </location>
</feature>
<feature type="modified residue" description="5-hydroxylysine" evidence="3">
    <location>
        <position position="548"/>
    </location>
</feature>
<feature type="modified residue" description="4-hydroxyproline" evidence="3">
    <location>
        <position position="554"/>
    </location>
</feature>
<feature type="modified residue" description="4-hydroxyproline" evidence="3">
    <location>
        <position position="569"/>
    </location>
</feature>
<feature type="modified residue" description="4-hydroxyproline" evidence="3">
    <location>
        <position position="575"/>
    </location>
</feature>
<feature type="modified residue" description="Phosphoserine" evidence="2">
    <location>
        <position position="584"/>
    </location>
</feature>
<feature type="modified residue" description="4-hydroxyproline" evidence="3">
    <location>
        <position position="596"/>
    </location>
</feature>
<feature type="modified residue" description="4-hydroxyproline" evidence="3">
    <location>
        <position position="602"/>
    </location>
</feature>
<feature type="modified residue" description="4-hydroxyproline" evidence="3">
    <location>
        <position position="605"/>
    </location>
</feature>
<feature type="modified residue" description="4-hydroxyproline" evidence="3">
    <location>
        <position position="614"/>
    </location>
</feature>
<feature type="modified residue" description="4-hydroxyproline" evidence="3">
    <location>
        <position position="620"/>
    </location>
</feature>
<feature type="modified residue" description="4-hydroxyproline" evidence="3">
    <location>
        <position position="638"/>
    </location>
</feature>
<feature type="modified residue" description="4-hydroxyproline" evidence="3">
    <location>
        <position position="647"/>
    </location>
</feature>
<feature type="modified residue" description="4-hydroxyproline" evidence="3">
    <location>
        <position position="656"/>
    </location>
</feature>
<feature type="modified residue" description="5-hydroxylysine" evidence="3">
    <location>
        <position position="659"/>
    </location>
</feature>
<feature type="modified residue" description="4-hydroxyproline" evidence="3">
    <location>
        <position position="668"/>
    </location>
</feature>
<feature type="modified residue" description="4-hydroxyproline" evidence="3">
    <location>
        <position position="674"/>
    </location>
</feature>
<feature type="modified residue" description="3-hydroxyproline" evidence="4">
    <location>
        <position position="682"/>
    </location>
</feature>
<feature type="modified residue" description="4-hydroxyproline" evidence="4">
    <location>
        <position position="683"/>
    </location>
</feature>
<feature type="modified residue" description="4-hydroxyproline" evidence="4">
    <location>
        <position position="692"/>
    </location>
</feature>
<feature type="modified residue" description="4-hydroxyproline" evidence="4">
    <location>
        <position position="695"/>
    </location>
</feature>
<feature type="modified residue" description="4-hydroxyproline" evidence="3">
    <location>
        <position position="716"/>
    </location>
</feature>
<feature type="modified residue" description="4-hydroxyproline" evidence="3">
    <location>
        <position position="725"/>
    </location>
</feature>
<feature type="modified residue" description="4-hydroxyproline" evidence="3">
    <location>
        <position position="733"/>
    </location>
</feature>
<feature type="modified residue" description="4-hydroxyproline" evidence="3">
    <location>
        <position position="742"/>
    </location>
</feature>
<feature type="modified residue" description="4-hydroxyproline" evidence="3">
    <location>
        <position position="760"/>
    </location>
</feature>
<feature type="modified residue" description="4-hydroxyproline" evidence="3">
    <location>
        <position position="769"/>
    </location>
</feature>
<feature type="modified residue" description="4-hydroxyproline" evidence="3">
    <location>
        <position position="772"/>
    </location>
</feature>
<feature type="modified residue" description="4-hydroxyproline" evidence="3">
    <location>
        <position position="778"/>
    </location>
</feature>
<feature type="modified residue" description="4-hydroxyproline" evidence="3">
    <location>
        <position position="793"/>
    </location>
</feature>
<feature type="modified residue" description="4-hydroxyproline" evidence="3">
    <location>
        <position position="799"/>
    </location>
</feature>
<feature type="modified residue" description="4-hydroxyproline" evidence="3">
    <location>
        <position position="805"/>
    </location>
</feature>
<feature type="modified residue" description="4-hydroxyproline" evidence="3">
    <location>
        <position position="814"/>
    </location>
</feature>
<feature type="modified residue" description="4-hydroxyproline" evidence="3">
    <location>
        <position position="820"/>
    </location>
</feature>
<feature type="modified residue" description="5-hydroxylysine" evidence="3">
    <location>
        <position position="829"/>
    </location>
</feature>
<feature type="modified residue" description="4-hydroxyproline" evidence="3">
    <location>
        <position position="832"/>
    </location>
</feature>
<feature type="modified residue" description="4-hydroxyproline" evidence="3">
    <location>
        <position position="835"/>
    </location>
</feature>
<feature type="modified residue" description="4-hydroxyproline" evidence="3">
    <location>
        <position position="838"/>
    </location>
</feature>
<feature type="modified residue" description="5-hydroxylysine" evidence="3">
    <location>
        <position position="883"/>
    </location>
</feature>
<feature type="modified residue" description="4-hydroxyproline" evidence="3">
    <location>
        <position position="905"/>
    </location>
</feature>
<feature type="modified residue" description="4-hydroxyproline" evidence="3">
    <location>
        <position position="908"/>
    </location>
</feature>
<feature type="modified residue" description="4-hydroxyproline" evidence="3">
    <location>
        <position position="926"/>
    </location>
</feature>
<feature type="modified residue" description="4-hydroxyproline" evidence="4">
    <location>
        <position position="941"/>
    </location>
</feature>
<feature type="modified residue" description="3-hydroxyproline" evidence="4">
    <location>
        <position position="946"/>
    </location>
</feature>
<feature type="modified residue" description="4-hydroxyproline" evidence="4">
    <location>
        <position position="947"/>
    </location>
</feature>
<feature type="modified residue" description="3-hydroxyproline" evidence="4">
    <location>
        <position position="961"/>
    </location>
</feature>
<feature type="modified residue" description="4-hydroxyproline" evidence="4">
    <location>
        <position position="962"/>
    </location>
</feature>
<feature type="modified residue" description="3-hydroxyproline" evidence="4">
    <location>
        <position position="964"/>
    </location>
</feature>
<feature type="modified residue" description="4-hydroxyproline" evidence="4">
    <location>
        <position position="965"/>
    </location>
</feature>
<feature type="modified residue" description="3-hydroxyproline" evidence="4">
    <location>
        <position position="967"/>
    </location>
</feature>
<feature type="modified residue" description="4-hydroxyproline" evidence="4">
    <location>
        <position position="968"/>
    </location>
</feature>
<feature type="modified residue" description="4-hydroxyproline" evidence="4">
    <location>
        <position position="971"/>
    </location>
</feature>
<feature type="modified residue" description="4-hydroxyproline" evidence="4">
    <location>
        <position position="974"/>
    </location>
</feature>
<feature type="glycosylation site" description="O-linked (Gal...) hydroxylysine; alternate" evidence="1">
    <location>
        <position position="84"/>
    </location>
</feature>
<feature type="unsure residue" description="I or L" evidence="6">
    <location>
        <position position="2"/>
    </location>
</feature>
<feature type="unsure residue" description="L or I" evidence="6">
    <location>
        <position position="16"/>
    </location>
</feature>
<feature type="unsure residue" description="L or I" evidence="6">
    <location>
        <position position="74"/>
    </location>
</feature>
<feature type="unsure residue" description="L or I" evidence="6">
    <location>
        <position position="80"/>
    </location>
</feature>
<feature type="unsure residue" description="L or I" evidence="6">
    <location>
        <position position="92"/>
    </location>
</feature>
<feature type="unsure residue" description="L or I" evidence="6">
    <location>
        <position position="125"/>
    </location>
</feature>
<feature type="unsure residue" description="I or L" evidence="6">
    <location>
        <position position="224"/>
    </location>
</feature>
<feature type="unsure residue" description="I or L" evidence="6">
    <location>
        <position position="274"/>
    </location>
</feature>
<feature type="unsure residue" description="L or I" evidence="6">
    <location>
        <position position="298"/>
    </location>
</feature>
<feature type="unsure residue" description="L or I" evidence="6">
    <location>
        <position position="348"/>
    </location>
</feature>
<feature type="unsure residue" description="L or I" evidence="6">
    <location>
        <position position="354"/>
    </location>
</feature>
<feature type="unsure residue" description="L or I" evidence="6">
    <location>
        <position position="459"/>
    </location>
</feature>
<feature type="unsure residue" description="L or I" evidence="6">
    <location>
        <position position="469"/>
    </location>
</feature>
<feature type="unsure residue" description="L or I" evidence="6">
    <location>
        <position position="523"/>
    </location>
</feature>
<feature type="unsure residue" description="L or I" evidence="6">
    <location>
        <position position="535"/>
    </location>
</feature>
<feature type="unsure residue" description="L or I" evidence="6">
    <location>
        <position position="562"/>
    </location>
</feature>
<feature type="unsure residue" description="I or L" evidence="6">
    <location>
        <position position="566"/>
    </location>
</feature>
<feature type="unsure residue" description="I or L" evidence="6">
    <location>
        <position position="650"/>
    </location>
</feature>
<feature type="unsure residue" description="I or L" evidence="6">
    <location>
        <position position="750"/>
    </location>
</feature>
<feature type="unsure residue" description="L or I" evidence="6">
    <location>
        <position position="759"/>
    </location>
</feature>
<feature type="unsure residue" description="L or I" evidence="6">
    <location>
        <position position="771"/>
    </location>
</feature>
<feature type="unsure residue" description="L or I" evidence="6">
    <location>
        <position position="801"/>
    </location>
</feature>
<feature type="unsure residue" description="L or I" evidence="6">
    <location>
        <position position="898"/>
    </location>
</feature>
<feature type="unsure residue" description="L or I" evidence="6">
    <location>
        <position position="937"/>
    </location>
</feature>
<feature type="unsure residue" description="L or I" evidence="6">
    <location>
        <position position="940"/>
    </location>
</feature>
<feature type="unsure residue" description="I or L" evidence="6">
    <location>
        <position position="944"/>
    </location>
</feature>
<feature type="non-consecutive residues" evidence="7">
    <location>
        <begin position="71"/>
        <end position="72"/>
    </location>
</feature>
<feature type="non-consecutive residues" evidence="7">
    <location>
        <begin position="232"/>
        <end position="233"/>
    </location>
</feature>
<feature type="non-consecutive residues" evidence="7">
    <location>
        <begin position="323"/>
        <end position="324"/>
    </location>
</feature>
<feature type="non-consecutive residues" evidence="7">
    <location>
        <begin position="459"/>
        <end position="460"/>
    </location>
</feature>
<feature type="non-consecutive residues" evidence="7">
    <location>
        <begin position="521"/>
        <end position="522"/>
    </location>
</feature>
<feature type="non-consecutive residues" evidence="7">
    <location>
        <begin position="727"/>
        <end position="728"/>
    </location>
</feature>
<feature type="non-consecutive residues" evidence="7">
    <location>
        <begin position="829"/>
        <end position="830"/>
    </location>
</feature>
<feature type="non-consecutive residues" evidence="7">
    <location>
        <begin position="892"/>
        <end position="893"/>
    </location>
</feature>
<feature type="non-terminal residue" evidence="7">
    <location>
        <position position="1"/>
    </location>
</feature>
<feature type="non-terminal residue" evidence="7">
    <location>
        <position position="974"/>
    </location>
</feature>
<organism evidence="7">
    <name type="scientific">Scelidodon sp. (strain SLP-2019)</name>
    <name type="common">South American ground sloth</name>
    <dbReference type="NCBI Taxonomy" id="2546666"/>
    <lineage>
        <taxon>Eukaryota</taxon>
        <taxon>Metazoa</taxon>
        <taxon>Chordata</taxon>
        <taxon>Craniata</taxon>
        <taxon>Vertebrata</taxon>
        <taxon>Euteleostomi</taxon>
        <taxon>Mammalia</taxon>
        <taxon>Eutheria</taxon>
        <taxon>Xenarthra</taxon>
        <taxon>Pilosa</taxon>
        <taxon>Folivora</taxon>
        <taxon>Mylodontidae</taxon>
        <taxon>Scelidodon</taxon>
    </lineage>
</organism>
<sequence length="974" mass="86722">GISVPGPMGPSGPRGLPGPPGSPGPQGFQGPPGEPGEPGASGPMGPRGPPGPPGKNGDDGEAGKPGRPGERRGLPGTAGLPGMKGHRGFSGLDGAKGDAGPAGPKGEPGSPGENGAPGQMGPRGLPGERGRPGASGPAGARGNDGATGAAGPPGPTGPAGPPGFPGAVGAKGEAGPQGARGSEGPQGVRGEPGPPGPAGAAGPAGNPGADGQPGAKGANGAPGIAGAPGFPGRGPSGPQGPSGPPGPKGNSGEPGAPGSKGDTGAKGEPGPTGIQGPPGPAGEEGKRGARGEPGPTGLPGPPGERGGPGSRGFPGADGVAGPKERGSPGPAGPKGSPGEAGRPGEAGLPGAKGLTGSPGSPGPDGKTGPPGPAGQDGRPGPPGPPGARGQAGVMGFPGPKGAAGEPGKAGERGVPGPPGAVGPAGKDGEAGAQGPPGPAGPAGERGEQGPAGSPGFQGLPGEQGVPGDLGAPGPSGARGERGFPGERGVQGPPGPAGPRGSNGAPGNDGAKGDAGAPGAPGGLQGMPGERGAAGLPGPKGDRGDAGPKGADGAPGKDGVRGLTGPIGPPGPAGAPGDKGESGPSGPAGPTGARGAPGDRGEPGPPGPAGFAGPPGADGQPGAKGEPGDAGAKGDAGPPGPAGPTGPPGPIGNVGAPGPKGARGSAGPPGATGFPGAAGRVGPPGPSGNAGPPGPPGPVGKEGGKGPRGETGPAGRPGEVGPPGPPGPGEKGSPGADGPAGAPGTPGPQGISGQRGVVGLPGQRGERGFPGLPGPSGEPGKQGPSGSSGERGPPGPVGPPGLAGPPGESGREGSPGAEGSPGRDGSPGPKGPPGAPGAPGAPGPVGPAGKSGDRGETGPAGPAGPAGPAGARGPAGPQGPRGDKGETGEQGDRRGFSGLQGPAGPPGSPGEQGPSGASGPAGPRGPPGSAGSPGKDGLNGLPGPIGPPGPRGRTGDAGPVGPPGPPGPPGPPGPP</sequence>
<evidence type="ECO:0000250" key="1">
    <source>
        <dbReference type="UniProtKB" id="P02452"/>
    </source>
</evidence>
<evidence type="ECO:0000250" key="2">
    <source>
        <dbReference type="UniProtKB" id="P02454"/>
    </source>
</evidence>
<evidence type="ECO:0000250" key="3">
    <source>
        <dbReference type="UniProtKB" id="P02457"/>
    </source>
</evidence>
<evidence type="ECO:0000250" key="4">
    <source>
        <dbReference type="UniProtKB" id="P11087"/>
    </source>
</evidence>
<evidence type="ECO:0000256" key="5">
    <source>
        <dbReference type="SAM" id="MobiDB-lite"/>
    </source>
</evidence>
<evidence type="ECO:0000269" key="6">
    <source>
    </source>
</evidence>
<evidence type="ECO:0000303" key="7">
    <source>
    </source>
</evidence>
<evidence type="ECO:0000305" key="8"/>
<dbReference type="GO" id="GO:0031012">
    <property type="term" value="C:extracellular matrix"/>
    <property type="evidence" value="ECO:0007669"/>
    <property type="project" value="TreeGrafter"/>
</dbReference>
<dbReference type="GO" id="GO:0005615">
    <property type="term" value="C:extracellular space"/>
    <property type="evidence" value="ECO:0007669"/>
    <property type="project" value="TreeGrafter"/>
</dbReference>
<dbReference type="InterPro" id="IPR008160">
    <property type="entry name" value="Collagen"/>
</dbReference>
<dbReference type="InterPro" id="IPR050149">
    <property type="entry name" value="Collagen_superfamily"/>
</dbReference>
<dbReference type="PANTHER" id="PTHR24023">
    <property type="entry name" value="COLLAGEN ALPHA"/>
    <property type="match status" value="1"/>
</dbReference>
<dbReference type="PANTHER" id="PTHR24023:SF1082">
    <property type="entry name" value="COLLAGEN TRIPLE HELIX REPEAT"/>
    <property type="match status" value="1"/>
</dbReference>
<dbReference type="Pfam" id="PF01391">
    <property type="entry name" value="Collagen"/>
    <property type="match status" value="13"/>
</dbReference>
<comment type="function">
    <text evidence="8">Type I collagen is a member of group I collagen (fibrillar forming collagen).</text>
</comment>
<comment type="subunit">
    <text evidence="8">Trimers of one alpha 2(I) and two alpha 1(I) chains.</text>
</comment>
<comment type="subcellular location">
    <subcellularLocation>
        <location>Secreted</location>
    </subcellularLocation>
    <subcellularLocation>
        <location>Secreted</location>
        <location>Extracellular space</location>
    </subcellularLocation>
    <subcellularLocation>
        <location evidence="8">Secreted</location>
        <location evidence="8">Extracellular space</location>
        <location evidence="8">Extracellular matrix</location>
    </subcellularLocation>
</comment>
<comment type="tissue specificity">
    <text evidence="6">Expressed in bones.</text>
</comment>
<comment type="PTM">
    <text evidence="1">Contains mostly 4-hydroxyproline. Proline residues at the third position of the tripeptide repeating unit (G-X-Y) are hydroxylated in some or all of the chains.</text>
</comment>
<comment type="PTM">
    <text evidence="4">Contains 3-hydroxyproline at a few sites. This modification occurs on the first proline residue in the sequence motif Gly-Pro-Hyp, where Hyp is 4-hydroxyproline.</text>
</comment>
<comment type="PTM">
    <text evidence="1">Lysine residues at the third position of the tripeptide repeating unit (G-X-Y) are 5-hydroxylated in some or all of the chains.</text>
</comment>
<comment type="PTM">
    <text evidence="1">O-glycosylated on hydroxylated lysine residues. The O-linked glycan consists of a Glc-Gal disaccharide.</text>
</comment>
<comment type="miscellaneous">
    <text evidence="6">These protein fragments were extracted from an ancient femur bone collected at Cueva Rosello in Peru.</text>
</comment>
<comment type="similarity">
    <text evidence="8">Belongs to the fibrillar collagen family.</text>
</comment>
<name>CO1A1_SCESW</name>
<reference evidence="8" key="1">
    <citation type="journal article" date="2019" name="Nat. Ecol. Evol.">
        <title>Palaeoproteomics resolves sloth relationships.</title>
        <authorList>
            <person name="Presslee S."/>
            <person name="Slater G.J."/>
            <person name="Pujos F."/>
            <person name="Forasiepi A.M."/>
            <person name="Fischer R."/>
            <person name="Molloy K."/>
            <person name="Mackie M."/>
            <person name="Olsen J.V."/>
            <person name="Kramarz A."/>
            <person name="Taglioretti M."/>
            <person name="Scaglia F."/>
            <person name="Lezcano M."/>
            <person name="Lanata J.L."/>
            <person name="Southon J."/>
            <person name="Feranec R."/>
            <person name="Bloch J."/>
            <person name="Hajduk A."/>
            <person name="Martin F.M."/>
            <person name="Salas Gismondi R."/>
            <person name="Reguero M."/>
            <person name="de Muizon C."/>
            <person name="Greenwood A."/>
            <person name="Chait B.T."/>
            <person name="Penkman K."/>
            <person name="Collins M."/>
            <person name="MacPhee R.D.E."/>
        </authorList>
    </citation>
    <scope>PROTEIN SEQUENCE</scope>
    <scope>TISSUE SPECIFICITY</scope>
    <scope>IDENTIFICATION BY MASS SPECTROMETRY</scope>
    <source>
        <tissue evidence="7">Bone</tissue>
    </source>
</reference>
<proteinExistence type="evidence at protein level"/>
<accession>C0HLI7</accession>
<keyword id="KW-0903">Direct protein sequencing</keyword>
<keyword id="KW-0952">Extinct organism protein</keyword>
<keyword id="KW-0272">Extracellular matrix</keyword>
<keyword id="KW-0325">Glycoprotein</keyword>
<keyword id="KW-0379">Hydroxylation</keyword>
<keyword id="KW-0597">Phosphoprotein</keyword>
<keyword id="KW-0964">Secreted</keyword>